<proteinExistence type="inferred from homology"/>
<feature type="chain" id="PRO_0000095029" description="tRNA 5-methylaminomethyl-2-thiouridine biosynthesis bifunctional protein MnmC">
    <location>
        <begin position="1"/>
        <end position="674"/>
    </location>
</feature>
<feature type="region of interest" description="tRNA (mnm(5)s(2)U34)-methyltransferase">
    <location>
        <begin position="1"/>
        <end position="246"/>
    </location>
</feature>
<feature type="region of interest" description="FAD-dependent cmnm(5)s(2)U34 oxidoreductase">
    <location>
        <begin position="272"/>
        <end position="674"/>
    </location>
</feature>
<feature type="sequence conflict" description="In Ref. 2; CAA13117." evidence="2" ref="2">
    <original>N</original>
    <variation>D</variation>
    <location>
        <position position="145"/>
    </location>
</feature>
<feature type="sequence conflict" description="In Ref. 2; CAA13117." evidence="2" ref="2">
    <original>LV</original>
    <variation>FI</variation>
    <location>
        <begin position="148"/>
        <end position="149"/>
    </location>
</feature>
<feature type="sequence conflict" description="In Ref. 2; CAA13117." evidence="2" ref="2">
    <original>L</original>
    <variation>F</variation>
    <location>
        <position position="153"/>
    </location>
</feature>
<feature type="sequence conflict" description="In Ref. 2; CAA13117." evidence="2" ref="2">
    <original>A</original>
    <variation>V</variation>
    <location>
        <position position="182"/>
    </location>
</feature>
<feature type="sequence conflict" description="In Ref. 2; CAA13117." evidence="2" ref="2">
    <original>N</original>
    <variation>G</variation>
    <location>
        <position position="193"/>
    </location>
</feature>
<sequence>MFIMSSISHAQLGWNDAGTPVSDQFDDVYFSNVNGLAETRYVFLEQNHLPQRWHNDDQRRFVIAETGFGTGLNFLAVWQAFVAFREANPDAKLKELHFISFEKYPLSKSDLIQAHQAWPELAQFAQKLHKHYPLAIPECQRIVLNDGLVTLDLWFGDIKDCLPKVATQEQGLVDAWFLDGFAPSKNPEMWNQNLFAGMAKLAKHGCTCATFTSAGFVRRGLIDAGFAMKKVKGFGTKREMIAGSLSEKVPYTNIAPEFRFEATHGLQEVAIIGGGIASATLATTLARRGVAVTLYCADEKPAQGASGNRQGAVYPLLSGDHNAVSRVFAPAFLFARQWIEQAAEQINFDHDWCGVTQLMWDEKATDKLKSMLEGNFPTQLVHGLSAEQTNQQVGVPVDKASVHYPLGGWLSPAELTQGLIHLLEQQGKLTAHYQTPIDALTWQPETQLWQLRSGDTLMSHQCVVIASGHQFDSLSQTAELPLGKVKGQVSHIPTTETLSKINSVLCYDGYMTPVSQQNGYHCIGASYDRQHLDATFDPQAQHENAQKLIHCLPEQTWPLEVDVSGNQSRQGVRCVSRDHLPFVGNVGEFSKITEQYRDLAQQHQAEPIALYPQLYALVGLGSRGLSSAPLMAELLASQMCGDPMPLGVDLLEQLHPSRMWVRKLRKGKALTQKV</sequence>
<keyword id="KW-0963">Cytoplasm</keyword>
<keyword id="KW-0274">FAD</keyword>
<keyword id="KW-0285">Flavoprotein</keyword>
<keyword id="KW-0489">Methyltransferase</keyword>
<keyword id="KW-0511">Multifunctional enzyme</keyword>
<keyword id="KW-0560">Oxidoreductase</keyword>
<keyword id="KW-1185">Reference proteome</keyword>
<keyword id="KW-0949">S-adenosyl-L-methionine</keyword>
<keyword id="KW-0808">Transferase</keyword>
<keyword id="KW-0819">tRNA processing</keyword>
<reference key="1">
    <citation type="journal article" date="2000" name="Nature">
        <title>DNA sequence of both chromosomes of the cholera pathogen Vibrio cholerae.</title>
        <authorList>
            <person name="Heidelberg J.F."/>
            <person name="Eisen J.A."/>
            <person name="Nelson W.C."/>
            <person name="Clayton R.A."/>
            <person name="Gwinn M.L."/>
            <person name="Dodson R.J."/>
            <person name="Haft D.H."/>
            <person name="Hickey E.K."/>
            <person name="Peterson J.D."/>
            <person name="Umayam L.A."/>
            <person name="Gill S.R."/>
            <person name="Nelson K.E."/>
            <person name="Read T.D."/>
            <person name="Tettelin H."/>
            <person name="Richardson D.L."/>
            <person name="Ermolaeva M.D."/>
            <person name="Vamathevan J.J."/>
            <person name="Bass S."/>
            <person name="Qin H."/>
            <person name="Dragoi I."/>
            <person name="Sellers P."/>
            <person name="McDonald L.A."/>
            <person name="Utterback T.R."/>
            <person name="Fleischmann R.D."/>
            <person name="Nierman W.C."/>
            <person name="White O."/>
            <person name="Salzberg S.L."/>
            <person name="Smith H.O."/>
            <person name="Colwell R.R."/>
            <person name="Mekalanos J.J."/>
            <person name="Venter J.C."/>
            <person name="Fraser C.M."/>
        </authorList>
    </citation>
    <scope>NUCLEOTIDE SEQUENCE [LARGE SCALE GENOMIC DNA]</scope>
    <source>
        <strain>ATCC 39315 / El Tor Inaba N16961</strain>
    </source>
</reference>
<reference key="2">
    <citation type="submission" date="1998-07" db="EMBL/GenBank/DDBJ databases">
        <authorList>
            <person name="Fallarino A."/>
        </authorList>
    </citation>
    <scope>NUCLEOTIDE SEQUENCE [GENOMIC DNA] OF 134-320</scope>
    <source>
        <strain>Classical Inaba Z17561 / Serotype O1</strain>
    </source>
</reference>
<protein>
    <recommendedName>
        <fullName evidence="1">tRNA 5-methylaminomethyl-2-thiouridine biosynthesis bifunctional protein MnmC</fullName>
        <shortName evidence="1">tRNA mnm(5)s(2)U biosynthesis bifunctional protein</shortName>
    </recommendedName>
    <domain>
        <recommendedName>
            <fullName evidence="1">tRNA (mnm(5)s(2)U34)-methyltransferase</fullName>
            <ecNumber evidence="1">2.1.1.61</ecNumber>
        </recommendedName>
    </domain>
    <domain>
        <recommendedName>
            <fullName evidence="1">FAD-dependent cmnm(5)s(2)U34 oxidoreductase</fullName>
            <ecNumber evidence="1">1.5.-.-</ecNumber>
        </recommendedName>
    </domain>
</protein>
<comment type="function">
    <text evidence="1">Catalyzes the last two steps in the biosynthesis of 5-methylaminomethyl-2-thiouridine (mnm(5)s(2)U) at the wobble position (U34) in tRNA. Catalyzes the FAD-dependent demodification of cmnm(5)s(2)U34 to nm(5)s(2)U34, followed by the transfer of a methyl group from S-adenosyl-L-methionine to nm(5)s(2)U34, to form mnm(5)s(2)U34.</text>
</comment>
<comment type="catalytic activity">
    <reaction evidence="1">
        <text>5-aminomethyl-2-thiouridine(34) in tRNA + S-adenosyl-L-methionine = 5-methylaminomethyl-2-thiouridine(34) in tRNA + S-adenosyl-L-homocysteine + H(+)</text>
        <dbReference type="Rhea" id="RHEA:19569"/>
        <dbReference type="Rhea" id="RHEA-COMP:10195"/>
        <dbReference type="Rhea" id="RHEA-COMP:10197"/>
        <dbReference type="ChEBI" id="CHEBI:15378"/>
        <dbReference type="ChEBI" id="CHEBI:57856"/>
        <dbReference type="ChEBI" id="CHEBI:59789"/>
        <dbReference type="ChEBI" id="CHEBI:74454"/>
        <dbReference type="ChEBI" id="CHEBI:74455"/>
        <dbReference type="EC" id="2.1.1.61"/>
    </reaction>
</comment>
<comment type="cofactor">
    <cofactor evidence="1">
        <name>FAD</name>
        <dbReference type="ChEBI" id="CHEBI:57692"/>
    </cofactor>
</comment>
<comment type="subcellular location">
    <subcellularLocation>
        <location evidence="1">Cytoplasm</location>
    </subcellularLocation>
</comment>
<comment type="similarity">
    <text evidence="1">In the N-terminal section; belongs to the methyltransferase superfamily. tRNA (mnm(5)s(2)U34)-methyltransferase family.</text>
</comment>
<comment type="similarity">
    <text evidence="1">In the C-terminal section; belongs to the DAO family.</text>
</comment>
<dbReference type="EC" id="2.1.1.61" evidence="1"/>
<dbReference type="EC" id="1.5.-.-" evidence="1"/>
<dbReference type="EMBL" id="AE003852">
    <property type="protein sequence ID" value="AAF95255.1"/>
    <property type="molecule type" value="Genomic_DNA"/>
</dbReference>
<dbReference type="EMBL" id="AJ231075">
    <property type="protein sequence ID" value="CAA13117.1"/>
    <property type="molecule type" value="Genomic_DNA"/>
</dbReference>
<dbReference type="PIR" id="D82118">
    <property type="entry name" value="D82118"/>
</dbReference>
<dbReference type="RefSeq" id="NP_231741.1">
    <property type="nucleotide sequence ID" value="NC_002505.1"/>
</dbReference>
<dbReference type="SMR" id="Q9KQ91"/>
<dbReference type="STRING" id="243277.VC_2110"/>
<dbReference type="DNASU" id="2613366"/>
<dbReference type="EnsemblBacteria" id="AAF95255">
    <property type="protein sequence ID" value="AAF95255"/>
    <property type="gene ID" value="VC_2110"/>
</dbReference>
<dbReference type="KEGG" id="vch:VC_2110"/>
<dbReference type="PATRIC" id="fig|243277.26.peg.2017"/>
<dbReference type="eggNOG" id="COG0665">
    <property type="taxonomic scope" value="Bacteria"/>
</dbReference>
<dbReference type="eggNOG" id="COG4121">
    <property type="taxonomic scope" value="Bacteria"/>
</dbReference>
<dbReference type="HOGENOM" id="CLU_022427_2_1_6"/>
<dbReference type="Proteomes" id="UP000000584">
    <property type="component" value="Chromosome 1"/>
</dbReference>
<dbReference type="GO" id="GO:0005737">
    <property type="term" value="C:cytoplasm"/>
    <property type="evidence" value="ECO:0000318"/>
    <property type="project" value="GO_Central"/>
</dbReference>
<dbReference type="GO" id="GO:0050660">
    <property type="term" value="F:flavin adenine dinucleotide binding"/>
    <property type="evidence" value="ECO:0007669"/>
    <property type="project" value="UniProtKB-UniRule"/>
</dbReference>
<dbReference type="GO" id="GO:0016645">
    <property type="term" value="F:oxidoreductase activity, acting on the CH-NH group of donors"/>
    <property type="evidence" value="ECO:0007669"/>
    <property type="project" value="InterPro"/>
</dbReference>
<dbReference type="GO" id="GO:0004808">
    <property type="term" value="F:tRNA (5-methylaminomethyl-2-thiouridylate)(34)-methyltransferase activity"/>
    <property type="evidence" value="ECO:0000318"/>
    <property type="project" value="GO_Central"/>
</dbReference>
<dbReference type="GO" id="GO:0032259">
    <property type="term" value="P:methylation"/>
    <property type="evidence" value="ECO:0007669"/>
    <property type="project" value="UniProtKB-KW"/>
</dbReference>
<dbReference type="GO" id="GO:0002098">
    <property type="term" value="P:tRNA wobble uridine modification"/>
    <property type="evidence" value="ECO:0000318"/>
    <property type="project" value="GO_Central"/>
</dbReference>
<dbReference type="FunFam" id="3.40.50.150:FF:000107">
    <property type="entry name" value="tRNA 5-methylaminomethyl-2-thiouridine biosynthesis bifunctional protein MnmC"/>
    <property type="match status" value="1"/>
</dbReference>
<dbReference type="Gene3D" id="3.30.9.10">
    <property type="entry name" value="D-Amino Acid Oxidase, subunit A, domain 2"/>
    <property type="match status" value="1"/>
</dbReference>
<dbReference type="Gene3D" id="3.50.50.60">
    <property type="entry name" value="FAD/NAD(P)-binding domain"/>
    <property type="match status" value="1"/>
</dbReference>
<dbReference type="Gene3D" id="3.40.50.150">
    <property type="entry name" value="Vaccinia Virus protein VP39"/>
    <property type="match status" value="1"/>
</dbReference>
<dbReference type="HAMAP" id="MF_01102">
    <property type="entry name" value="MnmC"/>
    <property type="match status" value="1"/>
</dbReference>
<dbReference type="InterPro" id="IPR006076">
    <property type="entry name" value="FAD-dep_OxRdtase"/>
</dbReference>
<dbReference type="InterPro" id="IPR036188">
    <property type="entry name" value="FAD/NAD-bd_sf"/>
</dbReference>
<dbReference type="InterPro" id="IPR008471">
    <property type="entry name" value="MnmC-like_methylTransf"/>
</dbReference>
<dbReference type="InterPro" id="IPR029063">
    <property type="entry name" value="SAM-dependent_MTases_sf"/>
</dbReference>
<dbReference type="InterPro" id="IPR023032">
    <property type="entry name" value="tRNA_MAMT_biosynth_bifunc_MnmC"/>
</dbReference>
<dbReference type="InterPro" id="IPR047785">
    <property type="entry name" value="tRNA_MNMC2"/>
</dbReference>
<dbReference type="InterPro" id="IPR017610">
    <property type="entry name" value="tRNA_S-uridine_synth_MnmC_C"/>
</dbReference>
<dbReference type="NCBIfam" id="TIGR03197">
    <property type="entry name" value="MnmC_Cterm"/>
    <property type="match status" value="1"/>
</dbReference>
<dbReference type="NCBIfam" id="NF002481">
    <property type="entry name" value="PRK01747.1-2"/>
    <property type="match status" value="1"/>
</dbReference>
<dbReference type="NCBIfam" id="NF002484">
    <property type="entry name" value="PRK01747.1-5"/>
    <property type="match status" value="1"/>
</dbReference>
<dbReference type="NCBIfam" id="NF033855">
    <property type="entry name" value="tRNA_MNMC2"/>
    <property type="match status" value="1"/>
</dbReference>
<dbReference type="PANTHER" id="PTHR13847">
    <property type="entry name" value="SARCOSINE DEHYDROGENASE-RELATED"/>
    <property type="match status" value="1"/>
</dbReference>
<dbReference type="PANTHER" id="PTHR13847:SF283">
    <property type="entry name" value="TRNA 5-METHYLAMINOMETHYL-2-THIOURIDINE BIOSYNTHESIS BIFUNCTIONAL PROTEIN MNMC"/>
    <property type="match status" value="1"/>
</dbReference>
<dbReference type="Pfam" id="PF01266">
    <property type="entry name" value="DAO"/>
    <property type="match status" value="1"/>
</dbReference>
<dbReference type="Pfam" id="PF05430">
    <property type="entry name" value="Methyltransf_30"/>
    <property type="match status" value="1"/>
</dbReference>
<dbReference type="SUPFAM" id="SSF51905">
    <property type="entry name" value="FAD/NAD(P)-binding domain"/>
    <property type="match status" value="1"/>
</dbReference>
<accession>Q9KQ91</accession>
<accession>O87021</accession>
<organism>
    <name type="scientific">Vibrio cholerae serotype O1 (strain ATCC 39315 / El Tor Inaba N16961)</name>
    <dbReference type="NCBI Taxonomy" id="243277"/>
    <lineage>
        <taxon>Bacteria</taxon>
        <taxon>Pseudomonadati</taxon>
        <taxon>Pseudomonadota</taxon>
        <taxon>Gammaproteobacteria</taxon>
        <taxon>Vibrionales</taxon>
        <taxon>Vibrionaceae</taxon>
        <taxon>Vibrio</taxon>
    </lineage>
</organism>
<gene>
    <name evidence="1" type="primary">mnmC</name>
    <name type="ordered locus">VC_2110</name>
</gene>
<name>MNMC_VIBCH</name>
<evidence type="ECO:0000255" key="1">
    <source>
        <dbReference type="HAMAP-Rule" id="MF_01102"/>
    </source>
</evidence>
<evidence type="ECO:0000305" key="2"/>